<protein>
    <recommendedName>
        <fullName>CWF19-like protein 1</fullName>
    </recommendedName>
</protein>
<reference key="1">
    <citation type="submission" date="2004-11" db="EMBL/GenBank/DDBJ databases">
        <authorList>
            <consortium name="The German cDNA consortium"/>
        </authorList>
    </citation>
    <scope>NUCLEOTIDE SEQUENCE [LARGE SCALE MRNA]</scope>
    <source>
        <tissue>Heart</tissue>
    </source>
</reference>
<sequence length="538" mass="60499">MAQKPLRLLTCGDVEGKFDILFNRVQAIQKKSGNFDLLLCVGNFFGSTPDAEWEEYKTGTKKAPIQTYVLGANNQETVKYFQDADGCELAENITYLGRKGIFTGSSGLQIVYLSGTESLNEPVPGYSFSPKDVSSLRTMLCTTSQFKGVDILLTSPWPKYVGNFGNSSGEVDTKKCGSALVSSLATGLKPRYHFAALEKTYYERLPYRNHIVLQENAQHATRFIALANVGNPEKKKYLYAFSIVPMKLMDAAELVKQPPDVTENPYRKSGQEASTGKQILAPVEESACQFFFDLNEKQGRKRSSTGRDSKSSPHPKQPRKPPQPPGPCWFCLASPEVEKHLVVNIGTHCYLALAKGGLSDDHVLILPIGHYQSVVELSAEVVEEVEKYKATLRRFFKSRGKRCVVFERNYKSHHLQLQVIPVPVSCCATDDIKDAFITQAQEQQIELLEIPEHSDIKQIAQPGAAYFYVELDTGEKLFHRIKKNFPLQFGREVLASEAILNVPDKSDWRQCQISKEDEETLARCFRKDFEPYDFTLDD</sequence>
<feature type="chain" id="PRO_0000315643" description="CWF19-like protein 1">
    <location>
        <begin position="1"/>
        <end position="538"/>
    </location>
</feature>
<feature type="region of interest" description="Disordered" evidence="1">
    <location>
        <begin position="259"/>
        <end position="278"/>
    </location>
</feature>
<feature type="region of interest" description="Disordered" evidence="1">
    <location>
        <begin position="298"/>
        <end position="324"/>
    </location>
</feature>
<accession>Q5R8R4</accession>
<proteinExistence type="evidence at transcript level"/>
<dbReference type="EMBL" id="CR859687">
    <property type="protein sequence ID" value="CAH91846.1"/>
    <property type="molecule type" value="mRNA"/>
</dbReference>
<dbReference type="RefSeq" id="NP_001126069.1">
    <property type="nucleotide sequence ID" value="NM_001132597.1"/>
</dbReference>
<dbReference type="SMR" id="Q5R8R4"/>
<dbReference type="FunCoup" id="Q5R8R4">
    <property type="interactions" value="1736"/>
</dbReference>
<dbReference type="STRING" id="9601.ENSPPYP00000002977"/>
<dbReference type="GeneID" id="100173021"/>
<dbReference type="KEGG" id="pon:100173021"/>
<dbReference type="CTD" id="55280"/>
<dbReference type="eggNOG" id="KOG2476">
    <property type="taxonomic scope" value="Eukaryota"/>
</dbReference>
<dbReference type="InParanoid" id="Q5R8R4"/>
<dbReference type="OrthoDB" id="444325at2759"/>
<dbReference type="Proteomes" id="UP000001595">
    <property type="component" value="Unplaced"/>
</dbReference>
<dbReference type="GO" id="GO:0071014">
    <property type="term" value="C:post-mRNA release spliceosomal complex"/>
    <property type="evidence" value="ECO:0007669"/>
    <property type="project" value="TreeGrafter"/>
</dbReference>
<dbReference type="GO" id="GO:0061632">
    <property type="term" value="F:RNA lariat debranching enzyme activator activity"/>
    <property type="evidence" value="ECO:0007669"/>
    <property type="project" value="TreeGrafter"/>
</dbReference>
<dbReference type="GO" id="GO:0000398">
    <property type="term" value="P:mRNA splicing, via spliceosome"/>
    <property type="evidence" value="ECO:0007669"/>
    <property type="project" value="TreeGrafter"/>
</dbReference>
<dbReference type="CDD" id="cd07380">
    <property type="entry name" value="MPP_CWF19_N"/>
    <property type="match status" value="1"/>
</dbReference>
<dbReference type="FunFam" id="3.30.428.10:FF:000024">
    <property type="entry name" value="CWF19-like cell cycle control factor 1"/>
    <property type="match status" value="1"/>
</dbReference>
<dbReference type="Gene3D" id="3.30.428.10">
    <property type="entry name" value="HIT-like"/>
    <property type="match status" value="1"/>
</dbReference>
<dbReference type="InterPro" id="IPR040194">
    <property type="entry name" value="Cwf19-like"/>
</dbReference>
<dbReference type="InterPro" id="IPR006768">
    <property type="entry name" value="Cwf19-like_C_dom-1"/>
</dbReference>
<dbReference type="InterPro" id="IPR006767">
    <property type="entry name" value="Cwf19-like_C_dom-2"/>
</dbReference>
<dbReference type="InterPro" id="IPR036265">
    <property type="entry name" value="HIT-like_sf"/>
</dbReference>
<dbReference type="PANTHER" id="PTHR12072">
    <property type="entry name" value="CWF19, CELL CYCLE CONTROL PROTEIN"/>
    <property type="match status" value="1"/>
</dbReference>
<dbReference type="PANTHER" id="PTHR12072:SF4">
    <property type="entry name" value="CWF19-LIKE PROTEIN 1"/>
    <property type="match status" value="1"/>
</dbReference>
<dbReference type="Pfam" id="PF04677">
    <property type="entry name" value="CwfJ_C_1"/>
    <property type="match status" value="1"/>
</dbReference>
<dbReference type="Pfam" id="PF04676">
    <property type="entry name" value="CwfJ_C_2"/>
    <property type="match status" value="1"/>
</dbReference>
<dbReference type="SUPFAM" id="SSF54197">
    <property type="entry name" value="HIT-like"/>
    <property type="match status" value="1"/>
</dbReference>
<comment type="similarity">
    <text evidence="2">Belongs to the CWF19 family.</text>
</comment>
<gene>
    <name type="primary">CWF19L1</name>
</gene>
<organism>
    <name type="scientific">Pongo abelii</name>
    <name type="common">Sumatran orangutan</name>
    <name type="synonym">Pongo pygmaeus abelii</name>
    <dbReference type="NCBI Taxonomy" id="9601"/>
    <lineage>
        <taxon>Eukaryota</taxon>
        <taxon>Metazoa</taxon>
        <taxon>Chordata</taxon>
        <taxon>Craniata</taxon>
        <taxon>Vertebrata</taxon>
        <taxon>Euteleostomi</taxon>
        <taxon>Mammalia</taxon>
        <taxon>Eutheria</taxon>
        <taxon>Euarchontoglires</taxon>
        <taxon>Primates</taxon>
        <taxon>Haplorrhini</taxon>
        <taxon>Catarrhini</taxon>
        <taxon>Hominidae</taxon>
        <taxon>Pongo</taxon>
    </lineage>
</organism>
<name>C19L1_PONAB</name>
<evidence type="ECO:0000256" key="1">
    <source>
        <dbReference type="SAM" id="MobiDB-lite"/>
    </source>
</evidence>
<evidence type="ECO:0000305" key="2"/>
<keyword id="KW-1185">Reference proteome</keyword>